<name>SSN3_EREGS</name>
<protein>
    <recommendedName>
        <fullName>Serine/threonine-protein kinase SSN3</fullName>
        <ecNumber>2.7.11.22</ecNumber>
        <ecNumber>2.7.11.23</ecNumber>
    </recommendedName>
    <alternativeName>
        <fullName>Cyclin-dependent kinase 8</fullName>
    </alternativeName>
</protein>
<organism>
    <name type="scientific">Eremothecium gossypii (strain ATCC 10895 / CBS 109.51 / FGSC 9923 / NRRL Y-1056)</name>
    <name type="common">Yeast</name>
    <name type="synonym">Ashbya gossypii</name>
    <dbReference type="NCBI Taxonomy" id="284811"/>
    <lineage>
        <taxon>Eukaryota</taxon>
        <taxon>Fungi</taxon>
        <taxon>Dikarya</taxon>
        <taxon>Ascomycota</taxon>
        <taxon>Saccharomycotina</taxon>
        <taxon>Saccharomycetes</taxon>
        <taxon>Saccharomycetales</taxon>
        <taxon>Saccharomycetaceae</taxon>
        <taxon>Eremothecium</taxon>
    </lineage>
</organism>
<keyword id="KW-0010">Activator</keyword>
<keyword id="KW-0067">ATP-binding</keyword>
<keyword id="KW-0418">Kinase</keyword>
<keyword id="KW-0460">Magnesium</keyword>
<keyword id="KW-0479">Metal-binding</keyword>
<keyword id="KW-0547">Nucleotide-binding</keyword>
<keyword id="KW-0539">Nucleus</keyword>
<keyword id="KW-1185">Reference proteome</keyword>
<keyword id="KW-0678">Repressor</keyword>
<keyword id="KW-0723">Serine/threonine-protein kinase</keyword>
<keyword id="KW-0804">Transcription</keyword>
<keyword id="KW-0805">Transcription regulation</keyword>
<keyword id="KW-0808">Transferase</keyword>
<dbReference type="EC" id="2.7.11.22"/>
<dbReference type="EC" id="2.7.11.23"/>
<dbReference type="EMBL" id="AE016820">
    <property type="protein sequence ID" value="AAS54242.2"/>
    <property type="molecule type" value="Genomic_DNA"/>
</dbReference>
<dbReference type="RefSeq" id="NP_986418.2">
    <property type="nucleotide sequence ID" value="NM_211480.2"/>
</dbReference>
<dbReference type="SMR" id="Q751F5"/>
<dbReference type="FunCoup" id="Q751F5">
    <property type="interactions" value="1193"/>
</dbReference>
<dbReference type="STRING" id="284811.Q751F5"/>
<dbReference type="EnsemblFungi" id="AAS54242">
    <property type="protein sequence ID" value="AAS54242"/>
    <property type="gene ID" value="AGOS_AGL249C"/>
</dbReference>
<dbReference type="GeneID" id="4622711"/>
<dbReference type="KEGG" id="ago:AGOS_AGL249C"/>
<dbReference type="eggNOG" id="KOG0666">
    <property type="taxonomic scope" value="Eukaryota"/>
</dbReference>
<dbReference type="HOGENOM" id="CLU_000288_181_6_1"/>
<dbReference type="InParanoid" id="Q751F5"/>
<dbReference type="OMA" id="IYMVSEF"/>
<dbReference type="OrthoDB" id="6284126at2759"/>
<dbReference type="Proteomes" id="UP000000591">
    <property type="component" value="Chromosome VII"/>
</dbReference>
<dbReference type="GO" id="GO:1990508">
    <property type="term" value="C:CKM complex"/>
    <property type="evidence" value="ECO:0007669"/>
    <property type="project" value="EnsemblFungi"/>
</dbReference>
<dbReference type="GO" id="GO:0016592">
    <property type="term" value="C:mediator complex"/>
    <property type="evidence" value="ECO:0000318"/>
    <property type="project" value="GO_Central"/>
</dbReference>
<dbReference type="GO" id="GO:0005634">
    <property type="term" value="C:nucleus"/>
    <property type="evidence" value="ECO:0000318"/>
    <property type="project" value="GO_Central"/>
</dbReference>
<dbReference type="GO" id="GO:0005524">
    <property type="term" value="F:ATP binding"/>
    <property type="evidence" value="ECO:0007669"/>
    <property type="project" value="UniProtKB-KW"/>
</dbReference>
<dbReference type="GO" id="GO:0004693">
    <property type="term" value="F:cyclin-dependent protein serine/threonine kinase activity"/>
    <property type="evidence" value="ECO:0000318"/>
    <property type="project" value="GO_Central"/>
</dbReference>
<dbReference type="GO" id="GO:0046872">
    <property type="term" value="F:metal ion binding"/>
    <property type="evidence" value="ECO:0007669"/>
    <property type="project" value="UniProtKB-KW"/>
</dbReference>
<dbReference type="GO" id="GO:0106310">
    <property type="term" value="F:protein serine kinase activity"/>
    <property type="evidence" value="ECO:0007669"/>
    <property type="project" value="RHEA"/>
</dbReference>
<dbReference type="GO" id="GO:0008353">
    <property type="term" value="F:RNA polymerase II CTD heptapeptide repeat kinase activity"/>
    <property type="evidence" value="ECO:0007669"/>
    <property type="project" value="UniProtKB-EC"/>
</dbReference>
<dbReference type="GO" id="GO:0060258">
    <property type="term" value="P:negative regulation of filamentous growth"/>
    <property type="evidence" value="ECO:0007669"/>
    <property type="project" value="EnsemblFungi"/>
</dbReference>
<dbReference type="GO" id="GO:0000122">
    <property type="term" value="P:negative regulation of transcription by RNA polymerase II"/>
    <property type="evidence" value="ECO:0007669"/>
    <property type="project" value="EnsemblFungi"/>
</dbReference>
<dbReference type="GO" id="GO:0070481">
    <property type="term" value="P:nuclear-transcribed mRNA catabolic process, non-stop decay"/>
    <property type="evidence" value="ECO:0007669"/>
    <property type="project" value="EnsemblFungi"/>
</dbReference>
<dbReference type="GO" id="GO:0045944">
    <property type="term" value="P:positive regulation of transcription by RNA polymerase II"/>
    <property type="evidence" value="ECO:0007669"/>
    <property type="project" value="EnsemblFungi"/>
</dbReference>
<dbReference type="GO" id="GO:0031648">
    <property type="term" value="P:protein destabilization"/>
    <property type="evidence" value="ECO:0007669"/>
    <property type="project" value="EnsemblFungi"/>
</dbReference>
<dbReference type="FunFam" id="1.10.510.10:FF:000408">
    <property type="entry name" value="Serine/threonine-protein kinase SSN3"/>
    <property type="match status" value="1"/>
</dbReference>
<dbReference type="FunFam" id="3.30.200.20:FF:000774">
    <property type="entry name" value="Serine/threonine-protein kinase SSN3"/>
    <property type="match status" value="1"/>
</dbReference>
<dbReference type="Gene3D" id="3.30.200.20">
    <property type="entry name" value="Phosphorylase Kinase, domain 1"/>
    <property type="match status" value="2"/>
</dbReference>
<dbReference type="Gene3D" id="1.10.510.10">
    <property type="entry name" value="Transferase(Phosphotransferase) domain 1"/>
    <property type="match status" value="1"/>
</dbReference>
<dbReference type="InterPro" id="IPR050108">
    <property type="entry name" value="CDK"/>
</dbReference>
<dbReference type="InterPro" id="IPR011009">
    <property type="entry name" value="Kinase-like_dom_sf"/>
</dbReference>
<dbReference type="InterPro" id="IPR000719">
    <property type="entry name" value="Prot_kinase_dom"/>
</dbReference>
<dbReference type="InterPro" id="IPR008271">
    <property type="entry name" value="Ser/Thr_kinase_AS"/>
</dbReference>
<dbReference type="PANTHER" id="PTHR24056">
    <property type="entry name" value="CELL DIVISION PROTEIN KINASE"/>
    <property type="match status" value="1"/>
</dbReference>
<dbReference type="PANTHER" id="PTHR24056:SF495">
    <property type="entry name" value="CYCLIN-DEPENDENT KINASE 8-RELATED"/>
    <property type="match status" value="1"/>
</dbReference>
<dbReference type="Pfam" id="PF00069">
    <property type="entry name" value="Pkinase"/>
    <property type="match status" value="1"/>
</dbReference>
<dbReference type="SMART" id="SM00220">
    <property type="entry name" value="S_TKc"/>
    <property type="match status" value="1"/>
</dbReference>
<dbReference type="SUPFAM" id="SSF56112">
    <property type="entry name" value="Protein kinase-like (PK-like)"/>
    <property type="match status" value="1"/>
</dbReference>
<dbReference type="PROSITE" id="PS50011">
    <property type="entry name" value="PROTEIN_KINASE_DOM"/>
    <property type="match status" value="1"/>
</dbReference>
<dbReference type="PROSITE" id="PS00108">
    <property type="entry name" value="PROTEIN_KINASE_ST"/>
    <property type="match status" value="1"/>
</dbReference>
<feature type="chain" id="PRO_0000312932" description="Serine/threonine-protein kinase SSN3">
    <location>
        <begin position="1"/>
        <end position="581"/>
    </location>
</feature>
<feature type="domain" description="Protein kinase" evidence="2">
    <location>
        <begin position="85"/>
        <end position="475"/>
    </location>
</feature>
<feature type="region of interest" description="Disordered" evidence="4">
    <location>
        <begin position="34"/>
        <end position="57"/>
    </location>
</feature>
<feature type="compositionally biased region" description="Polar residues" evidence="4">
    <location>
        <begin position="48"/>
        <end position="57"/>
    </location>
</feature>
<feature type="active site" description="Proton acceptor" evidence="2 3">
    <location>
        <position position="298"/>
    </location>
</feature>
<feature type="binding site" evidence="2">
    <location>
        <begin position="91"/>
        <end position="99"/>
    </location>
    <ligand>
        <name>ATP</name>
        <dbReference type="ChEBI" id="CHEBI:30616"/>
    </ligand>
</feature>
<feature type="binding site" evidence="2">
    <location>
        <position position="195"/>
    </location>
    <ligand>
        <name>ATP</name>
        <dbReference type="ChEBI" id="CHEBI:30616"/>
    </ligand>
</feature>
<gene>
    <name type="primary">SSN3</name>
    <name type="synonym">CDK8</name>
    <name type="ordered locus">AGL249C</name>
</gene>
<proteinExistence type="inferred from homology"/>
<accession>Q751F5</accession>
<comment type="function">
    <text evidence="1">Component of the SRB8-11 complex. The SRB8-11 complex is a regulatory module of the Mediator complex which is itself involved in regulation of basal and activated RNA polymerase II-dependent transcription. The SRB8-11 complex may be involved in the transcriptional repression of a subset of genes regulated by Mediator. It may inhibit the association of the Mediator complex with RNA polymerase II to form the holoenzyme complex. The SRB8-11 complex phosphorylates the C-terminal domain (CTD) of the largest subunit of RNA polymerase II (By similarity).</text>
</comment>
<comment type="catalytic activity">
    <reaction>
        <text>L-seryl-[protein] + ATP = O-phospho-L-seryl-[protein] + ADP + H(+)</text>
        <dbReference type="Rhea" id="RHEA:17989"/>
        <dbReference type="Rhea" id="RHEA-COMP:9863"/>
        <dbReference type="Rhea" id="RHEA-COMP:11604"/>
        <dbReference type="ChEBI" id="CHEBI:15378"/>
        <dbReference type="ChEBI" id="CHEBI:29999"/>
        <dbReference type="ChEBI" id="CHEBI:30616"/>
        <dbReference type="ChEBI" id="CHEBI:83421"/>
        <dbReference type="ChEBI" id="CHEBI:456216"/>
        <dbReference type="EC" id="2.7.11.22"/>
    </reaction>
</comment>
<comment type="catalytic activity">
    <reaction>
        <text>L-threonyl-[protein] + ATP = O-phospho-L-threonyl-[protein] + ADP + H(+)</text>
        <dbReference type="Rhea" id="RHEA:46608"/>
        <dbReference type="Rhea" id="RHEA-COMP:11060"/>
        <dbReference type="Rhea" id="RHEA-COMP:11605"/>
        <dbReference type="ChEBI" id="CHEBI:15378"/>
        <dbReference type="ChEBI" id="CHEBI:30013"/>
        <dbReference type="ChEBI" id="CHEBI:30616"/>
        <dbReference type="ChEBI" id="CHEBI:61977"/>
        <dbReference type="ChEBI" id="CHEBI:456216"/>
        <dbReference type="EC" id="2.7.11.22"/>
    </reaction>
</comment>
<comment type="catalytic activity">
    <reaction>
        <text>[DNA-directed RNA polymerase] + ATP = phospho-[DNA-directed RNA polymerase] + ADP + H(+)</text>
        <dbReference type="Rhea" id="RHEA:10216"/>
        <dbReference type="Rhea" id="RHEA-COMP:11321"/>
        <dbReference type="Rhea" id="RHEA-COMP:11322"/>
        <dbReference type="ChEBI" id="CHEBI:15378"/>
        <dbReference type="ChEBI" id="CHEBI:30616"/>
        <dbReference type="ChEBI" id="CHEBI:43176"/>
        <dbReference type="ChEBI" id="CHEBI:68546"/>
        <dbReference type="ChEBI" id="CHEBI:456216"/>
        <dbReference type="EC" id="2.7.11.23"/>
    </reaction>
</comment>
<comment type="cofactor">
    <cofactor evidence="1">
        <name>Mg(2+)</name>
        <dbReference type="ChEBI" id="CHEBI:18420"/>
    </cofactor>
</comment>
<comment type="subunit">
    <text evidence="1">Component of the SRB8-11 complex, a regulatory module of the Mediator complex.</text>
</comment>
<comment type="subcellular location">
    <subcellularLocation>
        <location evidence="5">Nucleus</location>
    </subcellularLocation>
</comment>
<comment type="similarity">
    <text evidence="5">Belongs to the protein kinase superfamily. CMGC Ser/Thr protein kinase family. CDC2/CDKX subfamily.</text>
</comment>
<reference key="1">
    <citation type="journal article" date="2004" name="Science">
        <title>The Ashbya gossypii genome as a tool for mapping the ancient Saccharomyces cerevisiae genome.</title>
        <authorList>
            <person name="Dietrich F.S."/>
            <person name="Voegeli S."/>
            <person name="Brachat S."/>
            <person name="Lerch A."/>
            <person name="Gates K."/>
            <person name="Steiner S."/>
            <person name="Mohr C."/>
            <person name="Poehlmann R."/>
            <person name="Luedi P."/>
            <person name="Choi S."/>
            <person name="Wing R.A."/>
            <person name="Flavier A."/>
            <person name="Gaffney T.D."/>
            <person name="Philippsen P."/>
        </authorList>
    </citation>
    <scope>NUCLEOTIDE SEQUENCE [LARGE SCALE GENOMIC DNA]</scope>
    <source>
        <strain>ATCC 10895 / CBS 109.51 / FGSC 9923 / NRRL Y-1056</strain>
    </source>
</reference>
<reference key="2">
    <citation type="journal article" date="2013" name="G3 (Bethesda)">
        <title>Genomes of Ashbya fungi isolated from insects reveal four mating-type loci, numerous translocations, lack of transposons, and distinct gene duplications.</title>
        <authorList>
            <person name="Dietrich F.S."/>
            <person name="Voegeli S."/>
            <person name="Kuo S."/>
            <person name="Philippsen P."/>
        </authorList>
    </citation>
    <scope>GENOME REANNOTATION</scope>
    <scope>SEQUENCE REVISION TO 368</scope>
    <source>
        <strain>ATCC 10895 / CBS 109.51 / FGSC 9923 / NRRL Y-1056</strain>
    </source>
</reference>
<evidence type="ECO:0000250" key="1"/>
<evidence type="ECO:0000255" key="2">
    <source>
        <dbReference type="PROSITE-ProRule" id="PRU00159"/>
    </source>
</evidence>
<evidence type="ECO:0000255" key="3">
    <source>
        <dbReference type="PROSITE-ProRule" id="PRU10027"/>
    </source>
</evidence>
<evidence type="ECO:0000256" key="4">
    <source>
        <dbReference type="SAM" id="MobiDB-lite"/>
    </source>
</evidence>
<evidence type="ECO:0000305" key="5"/>
<sequence length="581" mass="64530">MGIRLQSSDSMNNQHQTQQNKYFNVSNQASTRSLWSQQQQQQLLDTKGSASTSKSPMLMANNNVFSIGPYRQRKDAGRVSVLEKYEIIGYIAAGTYGKVYKAKAKETQEEQENSIHTHNQTLGSVSVAGIDGGMASREVENGGDDPLRLDGHGGIAVAPAAGGGLSSAAAHRARSNGAVKALPKKSAFTPFYAIKKFKTEREGVEQLHYTGISQSACREMSLCRELDNKHLTKLVEIFLERKSIYMVSEFAEHDLLQIIHFHSHPEKRLIAPRMLKSIMWQILDGVSYLHQNWILHRDLKPANIMVTVDGCVKIGDLGLARKFYNLVQTLYTGDKVVVTIWYRAPELLLGARHYSPAIDLWAVGCIFAELIGLRPIFKGEEAKMDSKKSVPFQGNQLQRILEVLGTPTHHTWPNIHKYPEYEQLSKFSKYRDNLSVWYHSSGGRDKAALSLLYSLLKYDPITRIDAIDALEHEYFTNNDPPVSSDVFEGLSYKYPPRRIHTSDNDIMNVGANKNKSGFNHHPPQQQTVNNNGVTNSSIGGLGVNRRILAAAAAAAAAVQVNGTNIVSGSSSSNGPIRKKKR</sequence>